<reference key="1">
    <citation type="journal article" date="2006" name="Nat. Biotechnol.">
        <title>Complete genome of the mutualistic, N2-fixing grass endophyte Azoarcus sp. strain BH72.</title>
        <authorList>
            <person name="Krause A."/>
            <person name="Ramakumar A."/>
            <person name="Bartels D."/>
            <person name="Battistoni F."/>
            <person name="Bekel T."/>
            <person name="Boch J."/>
            <person name="Boehm M."/>
            <person name="Friedrich F."/>
            <person name="Hurek T."/>
            <person name="Krause L."/>
            <person name="Linke B."/>
            <person name="McHardy A.C."/>
            <person name="Sarkar A."/>
            <person name="Schneiker S."/>
            <person name="Syed A.A."/>
            <person name="Thauer R."/>
            <person name="Vorhoelter F.-J."/>
            <person name="Weidner S."/>
            <person name="Puehler A."/>
            <person name="Reinhold-Hurek B."/>
            <person name="Kaiser O."/>
            <person name="Goesmann A."/>
        </authorList>
    </citation>
    <scope>NUCLEOTIDE SEQUENCE [LARGE SCALE GENOMIC DNA]</scope>
    <source>
        <strain>BH72</strain>
    </source>
</reference>
<name>RPOB_AZOSB</name>
<gene>
    <name evidence="1" type="primary">rpoB</name>
    <name type="ordered locus">azo3424</name>
</gene>
<feature type="chain" id="PRO_0000300279" description="DNA-directed RNA polymerase subunit beta">
    <location>
        <begin position="1"/>
        <end position="1377"/>
    </location>
</feature>
<dbReference type="EC" id="2.7.7.6" evidence="1"/>
<dbReference type="EMBL" id="AM406670">
    <property type="protein sequence ID" value="CAL96040.1"/>
    <property type="molecule type" value="Genomic_DNA"/>
</dbReference>
<dbReference type="RefSeq" id="WP_011767147.1">
    <property type="nucleotide sequence ID" value="NC_008702.1"/>
</dbReference>
<dbReference type="SMR" id="A1KB34"/>
<dbReference type="STRING" id="62928.azo3424"/>
<dbReference type="KEGG" id="azo:azo3424"/>
<dbReference type="eggNOG" id="COG0085">
    <property type="taxonomic scope" value="Bacteria"/>
</dbReference>
<dbReference type="HOGENOM" id="CLU_000524_4_0_4"/>
<dbReference type="Proteomes" id="UP000002588">
    <property type="component" value="Chromosome"/>
</dbReference>
<dbReference type="GO" id="GO:0000428">
    <property type="term" value="C:DNA-directed RNA polymerase complex"/>
    <property type="evidence" value="ECO:0007669"/>
    <property type="project" value="UniProtKB-KW"/>
</dbReference>
<dbReference type="GO" id="GO:0003677">
    <property type="term" value="F:DNA binding"/>
    <property type="evidence" value="ECO:0007669"/>
    <property type="project" value="UniProtKB-UniRule"/>
</dbReference>
<dbReference type="GO" id="GO:0003899">
    <property type="term" value="F:DNA-directed RNA polymerase activity"/>
    <property type="evidence" value="ECO:0007669"/>
    <property type="project" value="UniProtKB-UniRule"/>
</dbReference>
<dbReference type="GO" id="GO:0032549">
    <property type="term" value="F:ribonucleoside binding"/>
    <property type="evidence" value="ECO:0007669"/>
    <property type="project" value="InterPro"/>
</dbReference>
<dbReference type="GO" id="GO:0006351">
    <property type="term" value="P:DNA-templated transcription"/>
    <property type="evidence" value="ECO:0007669"/>
    <property type="project" value="UniProtKB-UniRule"/>
</dbReference>
<dbReference type="CDD" id="cd00653">
    <property type="entry name" value="RNA_pol_B_RPB2"/>
    <property type="match status" value="1"/>
</dbReference>
<dbReference type="FunFam" id="2.40.50.100:FF:000006">
    <property type="entry name" value="DNA-directed RNA polymerase subunit beta"/>
    <property type="match status" value="1"/>
</dbReference>
<dbReference type="FunFam" id="2.40.50.150:FF:000001">
    <property type="entry name" value="DNA-directed RNA polymerase subunit beta"/>
    <property type="match status" value="1"/>
</dbReference>
<dbReference type="FunFam" id="3.90.1800.10:FF:000001">
    <property type="entry name" value="DNA-directed RNA polymerase subunit beta"/>
    <property type="match status" value="1"/>
</dbReference>
<dbReference type="Gene3D" id="2.40.50.100">
    <property type="match status" value="1"/>
</dbReference>
<dbReference type="Gene3D" id="2.40.50.150">
    <property type="match status" value="1"/>
</dbReference>
<dbReference type="Gene3D" id="3.90.1100.10">
    <property type="match status" value="3"/>
</dbReference>
<dbReference type="Gene3D" id="2.40.270.10">
    <property type="entry name" value="DNA-directed RNA polymerase, subunit 2, domain 6"/>
    <property type="match status" value="1"/>
</dbReference>
<dbReference type="Gene3D" id="3.90.1800.10">
    <property type="entry name" value="RNA polymerase alpha subunit dimerisation domain"/>
    <property type="match status" value="1"/>
</dbReference>
<dbReference type="Gene3D" id="3.90.1110.10">
    <property type="entry name" value="RNA polymerase Rpb2, domain 2"/>
    <property type="match status" value="1"/>
</dbReference>
<dbReference type="HAMAP" id="MF_01321">
    <property type="entry name" value="RNApol_bact_RpoB"/>
    <property type="match status" value="1"/>
</dbReference>
<dbReference type="InterPro" id="IPR019462">
    <property type="entry name" value="DNA-dir_RNA_pol_bsu_external_1"/>
</dbReference>
<dbReference type="InterPro" id="IPR015712">
    <property type="entry name" value="DNA-dir_RNA_pol_su2"/>
</dbReference>
<dbReference type="InterPro" id="IPR007120">
    <property type="entry name" value="DNA-dir_RNAP_su2_dom"/>
</dbReference>
<dbReference type="InterPro" id="IPR037033">
    <property type="entry name" value="DNA-dir_RNAP_su2_hyb_sf"/>
</dbReference>
<dbReference type="InterPro" id="IPR010243">
    <property type="entry name" value="RNA_pol_bsu_bac"/>
</dbReference>
<dbReference type="InterPro" id="IPR007121">
    <property type="entry name" value="RNA_pol_bsu_CS"/>
</dbReference>
<dbReference type="InterPro" id="IPR007644">
    <property type="entry name" value="RNA_pol_bsu_protrusion"/>
</dbReference>
<dbReference type="InterPro" id="IPR007642">
    <property type="entry name" value="RNA_pol_Rpb2_2"/>
</dbReference>
<dbReference type="InterPro" id="IPR037034">
    <property type="entry name" value="RNA_pol_Rpb2_2_sf"/>
</dbReference>
<dbReference type="InterPro" id="IPR007645">
    <property type="entry name" value="RNA_pol_Rpb2_3"/>
</dbReference>
<dbReference type="InterPro" id="IPR007641">
    <property type="entry name" value="RNA_pol_Rpb2_7"/>
</dbReference>
<dbReference type="InterPro" id="IPR014724">
    <property type="entry name" value="RNA_pol_RPB2_OB-fold"/>
</dbReference>
<dbReference type="NCBIfam" id="NF001616">
    <property type="entry name" value="PRK00405.1"/>
    <property type="match status" value="1"/>
</dbReference>
<dbReference type="NCBIfam" id="TIGR02013">
    <property type="entry name" value="rpoB"/>
    <property type="match status" value="1"/>
</dbReference>
<dbReference type="PANTHER" id="PTHR20856">
    <property type="entry name" value="DNA-DIRECTED RNA POLYMERASE I SUBUNIT 2"/>
    <property type="match status" value="1"/>
</dbReference>
<dbReference type="Pfam" id="PF04563">
    <property type="entry name" value="RNA_pol_Rpb2_1"/>
    <property type="match status" value="1"/>
</dbReference>
<dbReference type="Pfam" id="PF04561">
    <property type="entry name" value="RNA_pol_Rpb2_2"/>
    <property type="match status" value="2"/>
</dbReference>
<dbReference type="Pfam" id="PF04565">
    <property type="entry name" value="RNA_pol_Rpb2_3"/>
    <property type="match status" value="1"/>
</dbReference>
<dbReference type="Pfam" id="PF10385">
    <property type="entry name" value="RNA_pol_Rpb2_45"/>
    <property type="match status" value="1"/>
</dbReference>
<dbReference type="Pfam" id="PF00562">
    <property type="entry name" value="RNA_pol_Rpb2_6"/>
    <property type="match status" value="1"/>
</dbReference>
<dbReference type="Pfam" id="PF04560">
    <property type="entry name" value="RNA_pol_Rpb2_7"/>
    <property type="match status" value="1"/>
</dbReference>
<dbReference type="SUPFAM" id="SSF64484">
    <property type="entry name" value="beta and beta-prime subunits of DNA dependent RNA-polymerase"/>
    <property type="match status" value="1"/>
</dbReference>
<dbReference type="PROSITE" id="PS01166">
    <property type="entry name" value="RNA_POL_BETA"/>
    <property type="match status" value="1"/>
</dbReference>
<sequence length="1377" mass="152990">MAYSYTEKKRIRKSFAKRAAVLDAPFLLATQIESFASFLQAETPPESRYNQGLQAAFTSIFPISSHSGNARLEFVQYMLGEPAFDVKECQQRGLTFASPLRARVRLVIMDREAPKETIKEVKEQEVYMGEIPLMTTTGSFVINGTERVIVSQLHRSPGVFFEHDRGKTHSSGKLLFSARIIPYRGSWLDFEFDPKDYLYFRVDRRRKMPVTILLRAIGMTPEEILETFHDFDAFHLSAEGAQFELVPDRLRGEVARFDIVDPTGKVIVARDKRITAKHIRELDQAGIKMIGVPDDFVLGRIIARNVVDPETGELLARANEEITEDLLGKLRDAGVRDLVTLYVNDLDRGAYISSTLRIDETADQWAARVAIYRMMRPGEPPTEEAVEALFQGLFYAPERYDLSTVGRMKFNRRAYPEKIDDKAPGWLKRFYDKVGPHGEEGEGVLANEDILAVIGVLVELRNGRGEIDDIDHLGNRRVRSVGELAENQFRAGLVRVERAVKERLSQAESDNLMPHDLINAKPISAAIKEFFGSSQLSQFMDQTNPLSEITHKRRVSALGPGGLTRERAGFEVRDVHPTHYGRVCPIETPEGPNIGLINSLAVYARTNRHGFLETPYRKVTDGKVTDQIDFLSAIEEGQYVIAQANAEIGGDGALEGDLVSCRHKGEFMLATADQVQYMDVAPGQIVSVAASLIPFLEHDDANRALMGANMQRQAVPCLRPEKPLVGTGIERTVAVDSGTAVQAMRGGVVDYVDAQRVVVRVNDNEALAGEVGVDIYNMIKYTRSNQNTNINQRPVVRVGDLIAKGDVIADGASTDLGELALGQNMLVAFMPWNGYNFEDSILISERVVADDRFTSIHVEELTVVARDTKLGPEEITRDIASLGEAQLSRLDESGIVYIGAEVEAGDVLVGKVTPKGETQLTPEEKLLRAIFGEKASDVKDTSLRVPSGMTGTVIDVQVFTREGIERDKRAQSIIDDQLRSFKTDLADQMRIVERDAFARIQRMIVGQKANGGPKKLAKGAAITAEYLETLEFYHWFDIRMADEELAIQLEAVREGLEKTRKDFEQAFEIKKKKLTQGDELPPDVQKMVKVYLAVKRRLQPGDKMAGRHGNKGVVSKIVPVEDMPYMEDGTPVDIVLNPLGVPSRMNIGQILETHLGWAAKGLGQKIDRLLRANAAAGEVRGLLEEIYNGSGKPEDFSEFTDGDVIELATNLKKGVPFATPVFDGAKEEEIAKMLELAGLPVGGQVTLFDGRTGEAFERKVTVGYKHVLKLHHLVDDKMHARSTGPYSLVTQQPLGGKAQFGGQRFGEMEVWALEAYGAAYTLQEMLTVKSDDVTGRTKVYENIVKGEHKIDSGMPESFNVLVKEIRSLAIDIDLDRE</sequence>
<organism>
    <name type="scientific">Azoarcus sp. (strain BH72)</name>
    <dbReference type="NCBI Taxonomy" id="418699"/>
    <lineage>
        <taxon>Bacteria</taxon>
        <taxon>Pseudomonadati</taxon>
        <taxon>Pseudomonadota</taxon>
        <taxon>Betaproteobacteria</taxon>
        <taxon>Rhodocyclales</taxon>
        <taxon>Zoogloeaceae</taxon>
        <taxon>Azoarcus</taxon>
    </lineage>
</organism>
<comment type="function">
    <text evidence="1">DNA-dependent RNA polymerase catalyzes the transcription of DNA into RNA using the four ribonucleoside triphosphates as substrates.</text>
</comment>
<comment type="catalytic activity">
    <reaction evidence="1">
        <text>RNA(n) + a ribonucleoside 5'-triphosphate = RNA(n+1) + diphosphate</text>
        <dbReference type="Rhea" id="RHEA:21248"/>
        <dbReference type="Rhea" id="RHEA-COMP:14527"/>
        <dbReference type="Rhea" id="RHEA-COMP:17342"/>
        <dbReference type="ChEBI" id="CHEBI:33019"/>
        <dbReference type="ChEBI" id="CHEBI:61557"/>
        <dbReference type="ChEBI" id="CHEBI:140395"/>
        <dbReference type="EC" id="2.7.7.6"/>
    </reaction>
</comment>
<comment type="subunit">
    <text evidence="1">The RNAP catalytic core consists of 2 alpha, 1 beta, 1 beta' and 1 omega subunit. When a sigma factor is associated with the core the holoenzyme is formed, which can initiate transcription.</text>
</comment>
<comment type="similarity">
    <text evidence="1">Belongs to the RNA polymerase beta chain family.</text>
</comment>
<accession>A1KB34</accession>
<keyword id="KW-0240">DNA-directed RNA polymerase</keyword>
<keyword id="KW-0548">Nucleotidyltransferase</keyword>
<keyword id="KW-1185">Reference proteome</keyword>
<keyword id="KW-0804">Transcription</keyword>
<keyword id="KW-0808">Transferase</keyword>
<proteinExistence type="inferred from homology"/>
<protein>
    <recommendedName>
        <fullName evidence="1">DNA-directed RNA polymerase subunit beta</fullName>
        <shortName evidence="1">RNAP subunit beta</shortName>
        <ecNumber evidence="1">2.7.7.6</ecNumber>
    </recommendedName>
    <alternativeName>
        <fullName evidence="1">RNA polymerase subunit beta</fullName>
    </alternativeName>
    <alternativeName>
        <fullName evidence="1">Transcriptase subunit beta</fullName>
    </alternativeName>
</protein>
<evidence type="ECO:0000255" key="1">
    <source>
        <dbReference type="HAMAP-Rule" id="MF_01321"/>
    </source>
</evidence>